<dbReference type="EC" id="2.4.1.21" evidence="1"/>
<dbReference type="EMBL" id="CP000673">
    <property type="protein sequence ID" value="EDK35488.1"/>
    <property type="molecule type" value="Genomic_DNA"/>
</dbReference>
<dbReference type="RefSeq" id="WP_012103819.1">
    <property type="nucleotide sequence ID" value="NC_009706.1"/>
</dbReference>
<dbReference type="SMR" id="A5N2Z2"/>
<dbReference type="STRING" id="431943.CKL_3497"/>
<dbReference type="CAZy" id="GT5">
    <property type="family name" value="Glycosyltransferase Family 5"/>
</dbReference>
<dbReference type="KEGG" id="ckl:CKL_3497"/>
<dbReference type="eggNOG" id="COG0297">
    <property type="taxonomic scope" value="Bacteria"/>
</dbReference>
<dbReference type="HOGENOM" id="CLU_009583_18_2_9"/>
<dbReference type="UniPathway" id="UPA00164"/>
<dbReference type="Proteomes" id="UP000002411">
    <property type="component" value="Chromosome"/>
</dbReference>
<dbReference type="GO" id="GO:0009011">
    <property type="term" value="F:alpha-1,4-glucan glucosyltransferase (ADP-glucose donor) activity"/>
    <property type="evidence" value="ECO:0007669"/>
    <property type="project" value="UniProtKB-UniRule"/>
</dbReference>
<dbReference type="GO" id="GO:0004373">
    <property type="term" value="F:alpha-1,4-glucan glucosyltransferase (UDP-glucose donor) activity"/>
    <property type="evidence" value="ECO:0007669"/>
    <property type="project" value="InterPro"/>
</dbReference>
<dbReference type="GO" id="GO:0005978">
    <property type="term" value="P:glycogen biosynthetic process"/>
    <property type="evidence" value="ECO:0007669"/>
    <property type="project" value="UniProtKB-UniRule"/>
</dbReference>
<dbReference type="CDD" id="cd03791">
    <property type="entry name" value="GT5_Glycogen_synthase_DULL1-like"/>
    <property type="match status" value="1"/>
</dbReference>
<dbReference type="Gene3D" id="3.40.50.2000">
    <property type="entry name" value="Glycogen Phosphorylase B"/>
    <property type="match status" value="2"/>
</dbReference>
<dbReference type="HAMAP" id="MF_00484">
    <property type="entry name" value="Glycogen_synth"/>
    <property type="match status" value="1"/>
</dbReference>
<dbReference type="InterPro" id="IPR001296">
    <property type="entry name" value="Glyco_trans_1"/>
</dbReference>
<dbReference type="InterPro" id="IPR011835">
    <property type="entry name" value="GS/SS"/>
</dbReference>
<dbReference type="InterPro" id="IPR013534">
    <property type="entry name" value="Starch_synth_cat_dom"/>
</dbReference>
<dbReference type="NCBIfam" id="TIGR02095">
    <property type="entry name" value="glgA"/>
    <property type="match status" value="1"/>
</dbReference>
<dbReference type="NCBIfam" id="NF001898">
    <property type="entry name" value="PRK00654.1-1"/>
    <property type="match status" value="1"/>
</dbReference>
<dbReference type="PANTHER" id="PTHR45825:SF11">
    <property type="entry name" value="ALPHA AMYLASE DOMAIN-CONTAINING PROTEIN"/>
    <property type="match status" value="1"/>
</dbReference>
<dbReference type="PANTHER" id="PTHR45825">
    <property type="entry name" value="GRANULE-BOUND STARCH SYNTHASE 1, CHLOROPLASTIC/AMYLOPLASTIC"/>
    <property type="match status" value="1"/>
</dbReference>
<dbReference type="Pfam" id="PF08323">
    <property type="entry name" value="Glyco_transf_5"/>
    <property type="match status" value="1"/>
</dbReference>
<dbReference type="Pfam" id="PF00534">
    <property type="entry name" value="Glycos_transf_1"/>
    <property type="match status" value="1"/>
</dbReference>
<dbReference type="SUPFAM" id="SSF53756">
    <property type="entry name" value="UDP-Glycosyltransferase/glycogen phosphorylase"/>
    <property type="match status" value="1"/>
</dbReference>
<sequence>MKVLFAASESHPFVKTGGLADVIGTLPRYLKKIGVDVRVVIPKYSAIKSHLASEFNFIKYFYVPVGWRNKYCGIFQCEYMGVIYYLIDNEYYFFRDELYGYYDDGERFAFFDRAVLDMLWQINYKPDIIHCNDWHTGMIPVLYKIQYKQSSFYRGVKFVFSIHNLLFQGNFDKNILGELFNLDGSLYENGSVELNGAVSFMKSGINYSDKISTVSRSYAFEIQSPEYGENLDGLLRSRSSDLWGIVNGIDYDIYNPEKDNMIFRNYNKNNLRNKMINKLKIQNDLNLDINENVPVLAIISRFTPQKGMDIIKTIGERLVSKHVQLIVLGTGYNEYEEYFRYLSSKYPRNVSTNIYFDDVLAHKIYAASDMFLMPSLFEPCGLGQLIALRYGTIPIVRETGGLKDTIIPYNKYTGEGNGFSFANFDGDDLLRIINDAVDYFEEKDIWNNIVTHAMESNNSWDNSAKPYKSLYESLL</sequence>
<protein>
    <recommendedName>
        <fullName evidence="1">Glycogen synthase</fullName>
        <ecNumber evidence="1">2.4.1.21</ecNumber>
    </recommendedName>
    <alternativeName>
        <fullName evidence="1">Starch [bacterial glycogen] synthase</fullName>
    </alternativeName>
</protein>
<evidence type="ECO:0000255" key="1">
    <source>
        <dbReference type="HAMAP-Rule" id="MF_00484"/>
    </source>
</evidence>
<keyword id="KW-0320">Glycogen biosynthesis</keyword>
<keyword id="KW-0328">Glycosyltransferase</keyword>
<keyword id="KW-1185">Reference proteome</keyword>
<keyword id="KW-0808">Transferase</keyword>
<feature type="chain" id="PRO_1000081321" description="Glycogen synthase">
    <location>
        <begin position="1"/>
        <end position="475"/>
    </location>
</feature>
<feature type="binding site" evidence="1">
    <location>
        <position position="15"/>
    </location>
    <ligand>
        <name>ADP-alpha-D-glucose</name>
        <dbReference type="ChEBI" id="CHEBI:57498"/>
    </ligand>
</feature>
<gene>
    <name evidence="1" type="primary">glgA</name>
    <name type="ordered locus">CKL_3497</name>
</gene>
<organism>
    <name type="scientific">Clostridium kluyveri (strain ATCC 8527 / DSM 555 / NBRC 12016 / NCIMB 10680 / K1)</name>
    <dbReference type="NCBI Taxonomy" id="431943"/>
    <lineage>
        <taxon>Bacteria</taxon>
        <taxon>Bacillati</taxon>
        <taxon>Bacillota</taxon>
        <taxon>Clostridia</taxon>
        <taxon>Eubacteriales</taxon>
        <taxon>Clostridiaceae</taxon>
        <taxon>Clostridium</taxon>
    </lineage>
</organism>
<reference key="1">
    <citation type="journal article" date="2008" name="Proc. Natl. Acad. Sci. U.S.A.">
        <title>The genome of Clostridium kluyveri, a strict anaerobe with unique metabolic features.</title>
        <authorList>
            <person name="Seedorf H."/>
            <person name="Fricke W.F."/>
            <person name="Veith B."/>
            <person name="Brueggemann H."/>
            <person name="Liesegang H."/>
            <person name="Strittmatter A."/>
            <person name="Miethke M."/>
            <person name="Buckel W."/>
            <person name="Hinderberger J."/>
            <person name="Li F."/>
            <person name="Hagemeier C."/>
            <person name="Thauer R.K."/>
            <person name="Gottschalk G."/>
        </authorList>
    </citation>
    <scope>NUCLEOTIDE SEQUENCE [LARGE SCALE GENOMIC DNA]</scope>
    <source>
        <strain>ATCC 8527 / DSM 555 / NBRC 12016 / NCIMB 10680 / K1</strain>
    </source>
</reference>
<comment type="function">
    <text evidence="1">Synthesizes alpha-1,4-glucan chains using ADP-glucose.</text>
</comment>
<comment type="catalytic activity">
    <reaction evidence="1">
        <text>[(1-&gt;4)-alpha-D-glucosyl](n) + ADP-alpha-D-glucose = [(1-&gt;4)-alpha-D-glucosyl](n+1) + ADP + H(+)</text>
        <dbReference type="Rhea" id="RHEA:18189"/>
        <dbReference type="Rhea" id="RHEA-COMP:9584"/>
        <dbReference type="Rhea" id="RHEA-COMP:9587"/>
        <dbReference type="ChEBI" id="CHEBI:15378"/>
        <dbReference type="ChEBI" id="CHEBI:15444"/>
        <dbReference type="ChEBI" id="CHEBI:57498"/>
        <dbReference type="ChEBI" id="CHEBI:456216"/>
        <dbReference type="EC" id="2.4.1.21"/>
    </reaction>
</comment>
<comment type="pathway">
    <text evidence="1">Glycan biosynthesis; glycogen biosynthesis.</text>
</comment>
<comment type="similarity">
    <text evidence="1">Belongs to the glycosyltransferase 1 family. Bacterial/plant glycogen synthase subfamily.</text>
</comment>
<name>GLGA_CLOK5</name>
<proteinExistence type="inferred from homology"/>
<accession>A5N2Z2</accession>